<evidence type="ECO:0000250" key="1">
    <source>
        <dbReference type="UniProtKB" id="A0A144KPJ6"/>
    </source>
</evidence>
<evidence type="ECO:0000255" key="2"/>
<evidence type="ECO:0000255" key="3">
    <source>
        <dbReference type="PROSITE-ProRule" id="PRU00258"/>
    </source>
</evidence>
<evidence type="ECO:0000256" key="4">
    <source>
        <dbReference type="SAM" id="MobiDB-lite"/>
    </source>
</evidence>
<evidence type="ECO:0000269" key="5">
    <source>
    </source>
</evidence>
<evidence type="ECO:0000269" key="6">
    <source>
    </source>
</evidence>
<evidence type="ECO:0000269" key="7">
    <source>
    </source>
</evidence>
<evidence type="ECO:0000269" key="8">
    <source>
    </source>
</evidence>
<evidence type="ECO:0000303" key="9">
    <source>
    </source>
</evidence>
<evidence type="ECO:0000303" key="10">
    <source>
    </source>
</evidence>
<evidence type="ECO:0000305" key="11"/>
<evidence type="ECO:0000305" key="12">
    <source>
    </source>
</evidence>
<keyword id="KW-0436">Ligase</keyword>
<keyword id="KW-0511">Multifunctional enzyme</keyword>
<keyword id="KW-0596">Phosphopantetheine</keyword>
<keyword id="KW-0597">Phosphoprotein</keyword>
<reference key="1">
    <citation type="journal article" date="2005" name="Eukaryot. Cell">
        <title>Functional analysis of all nonribosomal peptide synthetases in Cochliobolus heterostrophus reveals a factor, NPS6, involved in virulence and resistance to oxidative stress.</title>
        <authorList>
            <person name="Lee B.N."/>
            <person name="Kroken S."/>
            <person name="Chou D.Y."/>
            <person name="Robbertse B."/>
            <person name="Yoder O.C."/>
            <person name="Turgeon B.G."/>
        </authorList>
    </citation>
    <scope>NUCLEOTIDE SEQUENCE [GENOMIC DNA]</scope>
    <scope>FUNCTION</scope>
    <scope>DOMAIN</scope>
    <source>
        <strain>C4 / ATCC 48331 / race T</strain>
    </source>
</reference>
<reference key="2">
    <citation type="journal article" date="2012" name="PLoS Pathog.">
        <title>Diverse lifestyles and strategies of plant pathogenesis encoded in the genomes of eighteen Dothideomycetes fungi.</title>
        <authorList>
            <person name="Ohm R.A."/>
            <person name="Feau N."/>
            <person name="Henrissat B."/>
            <person name="Schoch C.L."/>
            <person name="Horwitz B.A."/>
            <person name="Barry K.W."/>
            <person name="Condon B.J."/>
            <person name="Copeland A.C."/>
            <person name="Dhillon B."/>
            <person name="Glaser F."/>
            <person name="Hesse C.N."/>
            <person name="Kosti I."/>
            <person name="LaButti K."/>
            <person name="Lindquist E.A."/>
            <person name="Lucas S."/>
            <person name="Salamov A.A."/>
            <person name="Bradshaw R.E."/>
            <person name="Ciuffetti L."/>
            <person name="Hamelin R.C."/>
            <person name="Kema G.H.J."/>
            <person name="Lawrence C."/>
            <person name="Scott J.A."/>
            <person name="Spatafora J.W."/>
            <person name="Turgeon B.G."/>
            <person name="de Wit P.J.G.M."/>
            <person name="Zhong S."/>
            <person name="Goodwin S.B."/>
            <person name="Grigoriev I.V."/>
        </authorList>
    </citation>
    <scope>NUCLEOTIDE SEQUENCE [LARGE SCALE GENOMIC DNA]</scope>
    <source>
        <strain>C4 / ATCC 48331 / race T</strain>
    </source>
</reference>
<reference key="3">
    <citation type="journal article" date="2013" name="PLoS Genet.">
        <title>Comparative genome structure, secondary metabolite, and effector coding capacity across Cochliobolus pathogens.</title>
        <authorList>
            <person name="Condon B.J."/>
            <person name="Leng Y."/>
            <person name="Wu D."/>
            <person name="Bushley K.E."/>
            <person name="Ohm R.A."/>
            <person name="Otillar R."/>
            <person name="Martin J."/>
            <person name="Schackwitz W."/>
            <person name="Grimwood J."/>
            <person name="MohdZainudin N."/>
            <person name="Xue C."/>
            <person name="Wang R."/>
            <person name="Manning V.A."/>
            <person name="Dhillon B."/>
            <person name="Tu Z.J."/>
            <person name="Steffenson B.J."/>
            <person name="Salamov A."/>
            <person name="Sun H."/>
            <person name="Lowry S."/>
            <person name="LaButti K."/>
            <person name="Han J."/>
            <person name="Copeland A."/>
            <person name="Lindquist E."/>
            <person name="Barry K."/>
            <person name="Schmutz J."/>
            <person name="Baker S.E."/>
            <person name="Ciuffetti L.M."/>
            <person name="Grigoriev I.V."/>
            <person name="Zhong S."/>
            <person name="Turgeon B.G."/>
        </authorList>
    </citation>
    <scope>NUCLEOTIDE SEQUENCE [LARGE SCALE GENOMIC DNA]</scope>
    <source>
        <strain>C4 / ATCC 48331 / race T</strain>
    </source>
</reference>
<reference key="4">
    <citation type="journal article" date="2006" name="Plant Cell">
        <title>NPS6, encoding a nonribosomal peptide synthetase involved in siderophore-mediated iron metabolism, is a conserved virulence determinant of plant pathogenic ascomycetes.</title>
        <authorList>
            <person name="Oide S."/>
            <person name="Moeder W."/>
            <person name="Krasnoff S."/>
            <person name="Gibson D."/>
            <person name="Haas H."/>
            <person name="Yoshioka K."/>
            <person name="Turgeon B.G."/>
        </authorList>
    </citation>
    <scope>FUNCTION</scope>
</reference>
<reference key="5">
    <citation type="journal article" date="2007" name="Eukaryot. Cell">
        <title>Intracellular siderophores are essential for ascomycete sexual development in heterothallic Cochliobolus heterostrophus and homothallic Gibberella zeae.</title>
        <authorList>
            <person name="Oide S."/>
            <person name="Krasnoff S.B."/>
            <person name="Gibson D.M."/>
            <person name="Turgeon B.G."/>
        </authorList>
    </citation>
    <scope>FUNCTION</scope>
    <scope>DISRUPTION PHENOTYPE</scope>
    <scope>PATHWAY</scope>
</reference>
<reference key="6">
    <citation type="journal article" date="2013" name="Mol. Plant Microbe Interact.">
        <title>Iron, oxidative stress, and virulence: roles of iron-sensitive transcription factor Sre1 and the redox sensor ChAp1 in the maize pathogen Cochliobolus heterostrophus.</title>
        <authorList>
            <person name="Zhang N."/>
            <person name="MohdZainudin N.A."/>
            <person name="Scher K."/>
            <person name="Condon B.J."/>
            <person name="Horwitz B.A."/>
            <person name="Turgeon B.G."/>
        </authorList>
    </citation>
    <scope>INDUCTION</scope>
</reference>
<accession>Q5D6D7</accession>
<accession>N4WT87</accession>
<comment type="function">
    <text evidence="5 6 7">Nonribosomal peptide synthetase; part of the gene cluster that mediates the biosynthesis of hydroxamate-containing siderophores that play a critical role in virulence (PubMed:15755917, PubMed:17056706, PubMed:23980626). Cochliobolus heterostrophus produces extracellular coprogen-type siderophores including coprogen, neocoprogen I and neocoprogen II, as well as the intracellular siderophore ferricrocin (PubMed:17056706). The role of extracellular siderophores is to supply iron to the fungus during plant infection, and the intracellular ferricrocin is required for intracellular iron distribution and storage with a crucial role in ascus and ascospore development (PubMed:17056706, PubMed:17601875). SIDA2 catalyzes the conversion of L-ornithine to N(5)-hydroxyornithine, the first step in the biosynthesis of all hydroxamate-containing siderophores (PubMed:23980626). The assembly of extracellular coprogen-type siderophores is then performed by the nonribosomal peptide synthetase (NRPS) NPS6 whereas the intracellular siderophore ferricrocin is assembled by NPS2 (PubMed:17056706, PubMed:17601875).</text>
</comment>
<comment type="pathway">
    <text evidence="7">Siderophore biosynthesis.</text>
</comment>
<comment type="induction">
    <text evidence="8">Expression is repressed by the transcription repressor SRE1 under iron replete conditions (PubMed:23980626).</text>
</comment>
<comment type="domain">
    <text evidence="1 12">NRP synthetases are composed of discrete domains (adenylation (A), thiolation (T) or peptidyl carrier protein (PCP) and condensation (C) domains) which when grouped together are referred to as a single module (By similarity). Each module is responsible for the recognition (via the A domain) and incorporation of a single amino acid into the growing peptide product (By similarity). Thus, an NRP synthetase is generally composed of one or more modules and can terminate in a thioesterase domain (TE) that releases the newly synthesized peptide from the enzyme (By similarity). Occasionally, methyltransferase domains (responsible for amino acid methylation) are present within the NRP synthetase (By similarity). NPS2 has the following architecture: A-T-C-A-T-C-A-T-C-A-T-C-T-C-T-C (PubMed:15755917).</text>
</comment>
<comment type="disruption phenotype">
    <text evidence="7">Leads to defective intracellular siderophore (ferricrocin) biosynthesis and sexual development (PubMed:17601875).</text>
</comment>
<comment type="similarity">
    <text evidence="11">Belongs to the NRP synthetase family.</text>
</comment>
<comment type="sequence caution" evidence="11">
    <conflict type="erroneous gene model prediction">
        <sequence resource="EMBL-CDS" id="AAX09984"/>
    </conflict>
</comment>
<sequence length="5386" mass="600338">MSSATSPCEMAHKNRLNQTLSILNGQPLLLDGPDLLHQLVPRLHHDANAIDFLEHGSKRRKFSYTTLHSLSDAFAARITEILGKLESASSIIPVFLPQSPELYVVLLAILKAGKAFCPLNLDTPTERLKFILDDISADIIITFESYSEHIRTATNIHVVSANRELSGCHDTFHHHSPHLSPDNLAYVLYTSGSTGLPKAVSVSHRAVTQSLLAHDPHIPAFSRFLQFAAPTFDVSIFEIFFPWFRGKTLVGCTRTQMLDDLPGTIASLDVDAAELTPTVVSSLLSGRSSVPGLKLLLTIGEMLTQPVIDEFGGDATKESILWAMYGPTEAAIHCTIWPQFSTSDSTNTIGHPLDTVSAFILASSTGLHTSPIDILPIGQAGELAIGGPQVAKEYLHRPDLTRASFVEHPYYGRLYRTGDRARINEQGLLECLGRVVAGQVKLRGQRIELGEIEQAIMKTRGCRAVTAMVIQDNLVAFCSGRDGMSRGAVLTTCKHWLPASMIPSDVFVIDVMPQLPSGKVDRKSLEKAYLHSHPNGSSSSLAISPKDPIGHSVWSVVSHHTTQNIGLETNLTSIGIDSLKSIRIASALRRKGYSLGAIEVLSAATLADLIEVCRESKPVDFSSQDKETKPGAFIDTKNLQLNGWRHNVALILPCTPLQEAMLAETRSKPTAYCNWIEVELSVAYTYEQIQDALLFLAQENEILRTGFCIDSQHTTVFSQVIWKELSLSQIQKVASFSNQYSMQSDHDFLRPFGVQIKTHCKLPRLLFQIHHALYDGWSLDLLLRDLDHCLRGKQDLKRPSFREVVRYLDDDRRLNKTQNSTNYWKSLLGDYIPTTLPNYHGKLVHNASIHRFFGQSSVSRHNLFECAHHSAINPQVYFQAATAFVLSLYTGSSDVVLGNVTSGRTIPVAGIEDIIGPCIASLPFRIDFADTYCVRDVLKRTQSTNRDSLRYSQLPLREIARAVNVKPGARLFETLFVWQQSMVEDEDDNASLIAKVVDSADELEFRITLEFEPVGDNILFRSTFDAATVSEHQIQYLFRQIDEVVEMFMVDADRHVSAINQCFTTPSLSIANPTPLEQRFDHGPSHAVEKWAATDPHRTAIIFGHEVNGSIKVKDTMTYSMLNSRANQLARLLAEHGVTNDQLVCIIMEKSVNLYTCILAVLKLGCGYLPLVPDTPIDRVKTILNDAQIAVCMSELSLSATLRSHLSVDIIDFDLAALSDYCDRNLEIPYNGQHLAYAVFTSGSTGTPKGVLVTQDNLMSNLHYLSTIYPFSADSRLLQACSQAFDVSVFEIFFTWYVGICLCSATKEHLFRDFEAAIDQLKVTHLSLTPTVAALVDPKNVPKVEFLVTAGEAVTEHVRRKWAGRGLYQGYGPSETTNICTVRVAVTPDDLINNIGSPFANTSAFVLDPESQDILPRGAVGELCFGGSQVFRGYLNRPELNAQKIIQHPTYGRIYRSGDMGILLPDDSILSTGRTDDQVKIRGQRVELGEVTSVILDHGAVWDCVTLALEQSTNSKTLVSFWVPREDSSSRVESLEPSKFTTTISELFDLLSRRVPSYMVPSHLIPISCLPMTPQAKIDKRFLQRLFSSCEEHTLNNATNSNSITETEEGELLSQWERDVSQLLIRMLATSSDKLKRTSSFFNLGIDSVSAIRFCSELRKAGLGDYSVSEVLKHPSIASLASLKKLQSSTTTTTTTMDKTLSVDASHIFTTNQLERIRSTVDMNGVRATKILPCTPLQEAMISSGLSSPGQAYCNVMVFDVKGDLQQLQRCWKTVIQRHEIFRTSFVATDNPLYSFAQVIVEGYGMGWHEDSIDSGLQLRVSKILFDLMEANKPPVYFSLNREEDSAKLLFCCHHALYDGIAMSTLLAEVQELYHGRQLLPPVSYDVYLKRMLEQNLDEADKYWSALLEGFEPTSFPSLTGKRVREYEAFTSSSRRLSMSLDSVRNSCQNSSVSLLSVVHAAWAKLLHFYTHESDICFGNIVSGRSFPGEHLERLVAPCFNTLPVRVDFDFGKSNRALVDLMHNQSIESLAYQLSPLRRIQKTTLKDGGRLFDSLVILQQPNVPLDSSIWRLEQDSGDMDIPVVCEVVQDQSEDALRLLMHYNNSLISETEASIVMETFDAALSSLIKFPDALSADTDMFPSNLWANYNTNFKRLESDSKFLHSGFERTALLHPDRIALDFWHSQGKKTTWSFEQLNREANQIAHALIRAGAWPDQVIPIHISKSPIYYASILGVLKSGAAFAPVHPDLPEARKQLMFKDLKPKIILCDDGSLLPEDLPDVTVLITQSMSSDDVSNPIIEDLKDTNLAYCLFTSGSTGVPKAVSMEHCAPIQTIESSRTIIPWNPQSRLLQYAAVTFDMCYYDCFLSWTFGFALCAAEQSDLLNDLSGVIKTLEADLLDLTPSVAETLKRADVPNVKWLYCIGEAMSSSVVKEWEGACVNSYGPTEAAFCTTITPLSKDESTSIIGKPFPTTSFAVFSEGSQTPLPALSIGELYIGGAQLARGYWGRANLTNDRFVSRCGQRFYKSGDMVRMLSDGNFEFMGRLDDQVKIRGLRVELGEINSILAELDPDLLSVTTQILLKGESSKEQLVSFMVLRQSIQESDIPTLQRKLKKLASARLPSYMVPQFFLVVDEIPKSMAGKIDKKALKHQWSKTESEVRNILAHISKTPTENISPLTSIYQLGLDSISAVQIASALRSQGYTIKATDVLKHTTCNDLAEHLDQISTSEAPESSPFDFHGFESRHRMQILRDHGIQDGNVAAVRPCTPLQNGMVSQFLAKEGAVYMNYLRLQLEPKVDLEKLKAAWSSTMERHSLLRTGFAHVNDPLFPFAMIEYTQVSVTLPWSAIREQKKSQSSNAWLQRIRAQSLKELYVPPWALRFVERNDQSFLDLAIFHALFDAQSLQNIFTDVTAFYKGLSLPPVPSLNEVVSHVIQSYKQDNSSGKEFWVELGKTANPSRFPNLAPLKCDPKPPIVCTRRSAKSLIDLENGCRQANTTMPAVGMASWLSLLSSYTGESSVTCGVVLSGRSSDATAHANFPCINTVPLAFTVANDTTKMLESITVLNAGIQEHQFKPLKEIQALMGFPNESLFDSIFAYQKLANNKDTSDLWTVVDENATIEYPVSIELEPKEERLEYRLTYFPHIIPREQASLILAQLDHLMESLIFHSQIPLAKTDYSQHLYSITPAKEDELPSDMKLLHELVEKTAQEHPQRIAFEFVSKESSGKRPVRKWTYRELDQEGNKIAQLLAAHNVKQNSLVGVCFDKCPEASFAMLGILKAGCAFVAIDPGAPAARQTFIIEDSDAQAVLSMSSQSAQFNAIAKVPVLNLDEVEWCSLSGQKLLQNSVIDPQDRSYCLYTSGTTGTPKGCELTHENAVQALLAFQRLFAGHWDVDSRWLQFASFHFDVSVLEQYWSWSVGICVVSAPRDLIFEDLAGSIRDLNITHIDLTPSLAQILHPDDVPSLCKGVFITGGESLKQEILDVWGPKGVIYNGYGPTEATIGCTMYPRVPANGKPSNIGPQFDNVGSLVLRPGSDVPVLRGGVGELCVSGKLVGKGYLNRPDLTTERFPYLNRFSQRVYRTGDVVRILHDGTFHFLGRADDQVKLRGQRLEVAEINSVIKQSDSDISDVATLVLKHPKQQKEQLVSFVVCGKALKAQPEVLLGEVGGIASAKQACNDKLPPYMLPTHFVPLTSMPLNVNNKADGKALKKMYESLSSTDLQKLSATSLSRDEQWSKQEEKLRDVMLEALGADHESMSKNTSFYELGMDSISVIGVTQSLKQSGFTKVTTSMILQCPTIRRLAKSLAANSAMSNVRGSILAAQQSINAVNHRHRRKIAKRLSVKPSMIESLAPCTPLQQGMIARSMENGNGLYFNTFRFRLNMDVDEGKLRHAWETMYNSTQILRTVFVNTEEGYLQAVLGGIPFNGFIQTSTQDDDLISHMAQLHKDWLSLNDVDFRQPFQVHLVSAQKQKQLIVHIFHGLYDGNSIGLLLQGVWNSYERRDSMPDAPSFHTALAHGPLRIPDDAKSFWKDLILARTSSLPTLFDNSSQDAVVIARTMRAPANFDLIRRQLNVTAQAVVQACWFSVLHRHVKGDVATGIIVSGRSIEFEGADRVIGPMFNTIPYHHRAQRSESWSSIIERVHDFNIQAHPFQHTPLRDIMKWCKRSPSNPLFDNLFVYQVPQDNQEWAKNDLWTLLDDEAIADYPLAFEVEHRGGTELKLTLVTQGHVANDQIAAKLLDMFEEALDQAINDPSAVLELPADVDGAVENNTAIRSKLDDNNDISDFEWSDNAIAIREEIANLTANEMESISETTSIFELGLDSIDAIKLSSKLKKRGMELSVSGIMRGLTIEKMAQNMSMKNTQTTEAAPHFDLDAHKTKLAKCLYHQGFSADDIEEILPLTPLQEAMVAEMIASEYTRYFNHDVLKLSPDTDISKFQKAWTTVVMGSPILRTGFVEVDNPDIDLSFAQIIHRQPHDFYSHMSFGSRPDFASIFKDLRNDAIQRPLSTPLFHLTFIDTPDQSYLVLSIAHALYDGWSLSLLHSDVHRAYQNEFEARPSYQPSLAEIIKTSGPDAAGFWQDYLSGANGNTFPRRTLEPDEKSSTVHRHQENSKIALELIQSFARKNNVSLQTVGQTVFALVTASFTRSLDVTFGSVLSGRDEEETSQLMFPTMNTVAIRTILHGKSIELLRYVQDNFANIKQWQHYPLRKAMSQARLDGRLFDSLFIYQKRLEQQQNEGERLYTSVGGHSDVEYAVCVEMEVVKEALIWRCAVKDDVFDLEETRQLLKRMDDVLIHLMERAEAPVIDMTAEGTSVCGLPAFEEAEMHTGSGHVESGEDDGQDTPSTETTNRIRKILAAVSKTPEEEMTNDMTIFHMGLDSISAIKVSSLLRKQGVVLSVGEMLQAGSVEKMAKLADARATEPSKDDAIDSASLGEILKELNEAEVFKRAGVDVDNVVQMLPVTAGQLYMLSMWLNTNGSNFYPEFSYEFEADVAFEDLKKAWQALVTTNPILRTCFVSVGNHQVSYVQLVLRDIDIAITNVTEYGEEEIRNCIRKATTQQPWARLLVSRNSHSWTLRLKIHHALYDGISLPLLMQQFEDLCNGSVLNASRNDILADFISSTSSLSSSPQRRQFWETHLLSRTAPTQLKQPSHTPTTRLEIFRPSLTPIQTLDTTARHHGISPHALFLAIYAKLHSRLPHSTTTDDNIVLGIYLANRSLSCTPELPGAAIPTLNLVPLRVSTPQSRSVVESAKQVQAHLRHLNDATLATTSLVEIERWTGVKIDVFVNFLVDIDDQGARPKHAHQRVKISPTLRQQYYCSSFSRTSSVVQPEFMDFQALRNEHVNGVYLHAIDIEATVREGYLDVGIFAPGDMISLEQGEQLMDGLKGEVEGL</sequence>
<dbReference type="EC" id="6.3.2.-" evidence="12"/>
<dbReference type="EMBL" id="AY884187">
    <property type="protein sequence ID" value="AAX09984.1"/>
    <property type="status" value="ALT_SEQ"/>
    <property type="molecule type" value="Genomic_DNA"/>
</dbReference>
<dbReference type="EMBL" id="KB733486">
    <property type="protein sequence ID" value="ENH99442.1"/>
    <property type="molecule type" value="Genomic_DNA"/>
</dbReference>
<dbReference type="RefSeq" id="XP_014073329.1">
    <property type="nucleotide sequence ID" value="XM_014217854.1"/>
</dbReference>
<dbReference type="SMR" id="Q5D6D7"/>
<dbReference type="HOGENOM" id="CLU_000092_2_0_1"/>
<dbReference type="OrthoDB" id="416786at2759"/>
<dbReference type="PHI-base" id="PHI:4234"/>
<dbReference type="Proteomes" id="UP000012338">
    <property type="component" value="Unassembled WGS sequence"/>
</dbReference>
<dbReference type="GO" id="GO:0005737">
    <property type="term" value="C:cytoplasm"/>
    <property type="evidence" value="ECO:0007669"/>
    <property type="project" value="TreeGrafter"/>
</dbReference>
<dbReference type="GO" id="GO:0016874">
    <property type="term" value="F:ligase activity"/>
    <property type="evidence" value="ECO:0007669"/>
    <property type="project" value="UniProtKB-KW"/>
</dbReference>
<dbReference type="GO" id="GO:0031177">
    <property type="term" value="F:phosphopantetheine binding"/>
    <property type="evidence" value="ECO:0007669"/>
    <property type="project" value="InterPro"/>
</dbReference>
<dbReference type="GO" id="GO:0043041">
    <property type="term" value="P:amino acid activation for nonribosomal peptide biosynthetic process"/>
    <property type="evidence" value="ECO:0007669"/>
    <property type="project" value="TreeGrafter"/>
</dbReference>
<dbReference type="GO" id="GO:0044550">
    <property type="term" value="P:secondary metabolite biosynthetic process"/>
    <property type="evidence" value="ECO:0007669"/>
    <property type="project" value="TreeGrafter"/>
</dbReference>
<dbReference type="CDD" id="cd05918">
    <property type="entry name" value="A_NRPS_SidN3_like"/>
    <property type="match status" value="3"/>
</dbReference>
<dbReference type="CDD" id="cd19542">
    <property type="entry name" value="CT_NRPS-like"/>
    <property type="match status" value="1"/>
</dbReference>
<dbReference type="FunFam" id="3.40.50.980:FF:000001">
    <property type="entry name" value="Non-ribosomal peptide synthetase"/>
    <property type="match status" value="2"/>
</dbReference>
<dbReference type="FunFam" id="3.30.300.30:FF:000015">
    <property type="entry name" value="Nonribosomal peptide synthase SidD"/>
    <property type="match status" value="2"/>
</dbReference>
<dbReference type="FunFam" id="1.10.1200.10:FF:000018">
    <property type="entry name" value="Nonribosomal siderophore peptide synthase SidC"/>
    <property type="match status" value="1"/>
</dbReference>
<dbReference type="FunFam" id="3.30.300.30:FF:000033">
    <property type="entry name" value="Nonribosomal siderophore peptide synthase SidC"/>
    <property type="match status" value="1"/>
</dbReference>
<dbReference type="FunFam" id="3.40.50.12780:FF:000024">
    <property type="entry name" value="Nonribosomal siderophore peptide synthase SidC"/>
    <property type="match status" value="2"/>
</dbReference>
<dbReference type="Gene3D" id="3.30.300.30">
    <property type="match status" value="4"/>
</dbReference>
<dbReference type="Gene3D" id="1.10.1200.10">
    <property type="entry name" value="ACP-like"/>
    <property type="match status" value="6"/>
</dbReference>
<dbReference type="Gene3D" id="3.30.559.10">
    <property type="entry name" value="Chloramphenicol acetyltransferase-like domain"/>
    <property type="match status" value="6"/>
</dbReference>
<dbReference type="Gene3D" id="3.40.50.12780">
    <property type="entry name" value="N-terminal domain of ligase-like"/>
    <property type="match status" value="4"/>
</dbReference>
<dbReference type="Gene3D" id="3.30.559.30">
    <property type="entry name" value="Nonribosomal peptide synthetase, condensation domain"/>
    <property type="match status" value="6"/>
</dbReference>
<dbReference type="InterPro" id="IPR010071">
    <property type="entry name" value="AA_adenyl_dom"/>
</dbReference>
<dbReference type="InterPro" id="IPR036736">
    <property type="entry name" value="ACP-like_sf"/>
</dbReference>
<dbReference type="InterPro" id="IPR045851">
    <property type="entry name" value="AMP-bd_C_sf"/>
</dbReference>
<dbReference type="InterPro" id="IPR020845">
    <property type="entry name" value="AMP-binding_CS"/>
</dbReference>
<dbReference type="InterPro" id="IPR000873">
    <property type="entry name" value="AMP-dep_synth/lig_dom"/>
</dbReference>
<dbReference type="InterPro" id="IPR042099">
    <property type="entry name" value="ANL_N_sf"/>
</dbReference>
<dbReference type="InterPro" id="IPR023213">
    <property type="entry name" value="CAT-like_dom_sf"/>
</dbReference>
<dbReference type="InterPro" id="IPR001242">
    <property type="entry name" value="Condensatn"/>
</dbReference>
<dbReference type="InterPro" id="IPR020806">
    <property type="entry name" value="PKS_PP-bd"/>
</dbReference>
<dbReference type="InterPro" id="IPR009081">
    <property type="entry name" value="PP-bd_ACP"/>
</dbReference>
<dbReference type="InterPro" id="IPR006162">
    <property type="entry name" value="Ppantetheine_attach_site"/>
</dbReference>
<dbReference type="NCBIfam" id="TIGR01733">
    <property type="entry name" value="AA-adenyl-dom"/>
    <property type="match status" value="3"/>
</dbReference>
<dbReference type="NCBIfam" id="NF003417">
    <property type="entry name" value="PRK04813.1"/>
    <property type="match status" value="4"/>
</dbReference>
<dbReference type="PANTHER" id="PTHR45527:SF1">
    <property type="entry name" value="FATTY ACID SYNTHASE"/>
    <property type="match status" value="1"/>
</dbReference>
<dbReference type="PANTHER" id="PTHR45527">
    <property type="entry name" value="NONRIBOSOMAL PEPTIDE SYNTHETASE"/>
    <property type="match status" value="1"/>
</dbReference>
<dbReference type="Pfam" id="PF00501">
    <property type="entry name" value="AMP-binding"/>
    <property type="match status" value="4"/>
</dbReference>
<dbReference type="Pfam" id="PF00668">
    <property type="entry name" value="Condensation"/>
    <property type="match status" value="6"/>
</dbReference>
<dbReference type="Pfam" id="PF00550">
    <property type="entry name" value="PP-binding"/>
    <property type="match status" value="6"/>
</dbReference>
<dbReference type="SMART" id="SM00823">
    <property type="entry name" value="PKS_PP"/>
    <property type="match status" value="6"/>
</dbReference>
<dbReference type="SMART" id="SM01294">
    <property type="entry name" value="PKS_PP_betabranch"/>
    <property type="match status" value="1"/>
</dbReference>
<dbReference type="SUPFAM" id="SSF56801">
    <property type="entry name" value="Acetyl-CoA synthetase-like"/>
    <property type="match status" value="4"/>
</dbReference>
<dbReference type="SUPFAM" id="SSF47336">
    <property type="entry name" value="ACP-like"/>
    <property type="match status" value="6"/>
</dbReference>
<dbReference type="SUPFAM" id="SSF52777">
    <property type="entry name" value="CoA-dependent acyltransferases"/>
    <property type="match status" value="12"/>
</dbReference>
<dbReference type="PROSITE" id="PS00455">
    <property type="entry name" value="AMP_BINDING"/>
    <property type="match status" value="1"/>
</dbReference>
<dbReference type="PROSITE" id="PS50075">
    <property type="entry name" value="CARRIER"/>
    <property type="match status" value="6"/>
</dbReference>
<dbReference type="PROSITE" id="PS00012">
    <property type="entry name" value="PHOSPHOPANTETHEINE"/>
    <property type="match status" value="5"/>
</dbReference>
<protein>
    <recommendedName>
        <fullName evidence="9">Nonribosomal peptide synthetase 2</fullName>
        <shortName evidence="9">NPRS 2</shortName>
        <ecNumber evidence="12">6.3.2.-</ecNumber>
    </recommendedName>
    <alternativeName>
        <fullName evidence="10">Ferricrocin synthetase</fullName>
    </alternativeName>
    <alternativeName>
        <fullName evidence="10">Intracellular siderophore synthetase</fullName>
    </alternativeName>
</protein>
<name>NPS2_COCH4</name>
<organism>
    <name type="scientific">Cochliobolus heterostrophus (strain C4 / ATCC 48331 / race T)</name>
    <name type="common">Southern corn leaf blight fungus</name>
    <name type="synonym">Bipolaris maydis</name>
    <dbReference type="NCBI Taxonomy" id="665024"/>
    <lineage>
        <taxon>Eukaryota</taxon>
        <taxon>Fungi</taxon>
        <taxon>Dikarya</taxon>
        <taxon>Ascomycota</taxon>
        <taxon>Pezizomycotina</taxon>
        <taxon>Dothideomycetes</taxon>
        <taxon>Pleosporomycetidae</taxon>
        <taxon>Pleosporales</taxon>
        <taxon>Pleosporineae</taxon>
        <taxon>Pleosporaceae</taxon>
        <taxon>Bipolaris</taxon>
    </lineage>
</organism>
<proteinExistence type="evidence at transcript level"/>
<feature type="chain" id="PRO_0000444384" description="Nonribosomal peptide synthetase 2">
    <location>
        <begin position="1"/>
        <end position="5386"/>
    </location>
</feature>
<feature type="domain" description="Carrier 1" evidence="3 12">
    <location>
        <begin position="544"/>
        <end position="617"/>
    </location>
</feature>
<feature type="domain" description="Carrier 2" evidence="3 12">
    <location>
        <begin position="1611"/>
        <end position="1688"/>
    </location>
</feature>
<feature type="domain" description="Carrier 3" evidence="3 12">
    <location>
        <begin position="2652"/>
        <end position="2725"/>
    </location>
</feature>
<feature type="domain" description="Carrier 4" evidence="3 12">
    <location>
        <begin position="3728"/>
        <end position="3805"/>
    </location>
</feature>
<feature type="domain" description="Carrier 5" evidence="3 12">
    <location>
        <begin position="4281"/>
        <end position="4357"/>
    </location>
</feature>
<feature type="domain" description="Carrier 6" evidence="3 12">
    <location>
        <begin position="4840"/>
        <end position="4913"/>
    </location>
</feature>
<feature type="region of interest" description="Adenylation 1" evidence="2 12">
    <location>
        <begin position="45"/>
        <end position="435"/>
    </location>
</feature>
<feature type="region of interest" description="Condensation 1" evidence="2 12">
    <location>
        <begin position="652"/>
        <end position="1059"/>
    </location>
</feature>
<feature type="region of interest" description="Adenylation 2" evidence="2 12">
    <location>
        <begin position="1089"/>
        <end position="1482"/>
    </location>
</feature>
<feature type="region of interest" description="Condensation 2" evidence="2 12">
    <location>
        <begin position="1731"/>
        <end position="2141"/>
    </location>
</feature>
<feature type="region of interest" description="Adenylation 3" evidence="2 12">
    <location>
        <begin position="2166"/>
        <end position="2551"/>
    </location>
</feature>
<feature type="region of interest" description="Condensation 3" evidence="2 12">
    <location>
        <begin position="2763"/>
        <end position="3174"/>
    </location>
</feature>
<feature type="region of interest" description="Adenylation 4" evidence="2 12">
    <location>
        <begin position="3202"/>
        <end position="3603"/>
    </location>
</feature>
<feature type="region of interest" description="Condensation 4" evidence="2 12">
    <location>
        <begin position="3846"/>
        <end position="4250"/>
    </location>
</feature>
<feature type="region of interest" description="Condensation 5" evidence="2 12">
    <location>
        <begin position="4391"/>
        <end position="4802"/>
    </location>
</feature>
<feature type="region of interest" description="Disordered" evidence="4">
    <location>
        <begin position="4821"/>
        <end position="4842"/>
    </location>
</feature>
<feature type="region of interest" description="Condensation 6" evidence="2 12">
    <location>
        <begin position="4952"/>
        <end position="5257"/>
    </location>
</feature>
<feature type="modified residue" description="O-(pantetheine 4'-phosphoryl)serine" evidence="3">
    <location>
        <position position="578"/>
    </location>
</feature>
<feature type="modified residue" description="O-(pantetheine 4'-phosphoryl)serine" evidence="3">
    <location>
        <position position="1648"/>
    </location>
</feature>
<feature type="modified residue" description="O-(pantetheine 4'-phosphoryl)serine" evidence="3">
    <location>
        <position position="2686"/>
    </location>
</feature>
<feature type="modified residue" description="O-(pantetheine 4'-phosphoryl)serine" evidence="3">
    <location>
        <position position="3765"/>
    </location>
</feature>
<feature type="modified residue" description="O-(pantetheine 4'-phosphoryl)serine" evidence="3">
    <location>
        <position position="4318"/>
    </location>
</feature>
<feature type="modified residue" description="O-(pantetheine 4'-phosphoryl)serine" evidence="3">
    <location>
        <position position="4874"/>
    </location>
</feature>
<gene>
    <name evidence="9" type="primary">NPS2</name>
</gene>